<organism>
    <name type="scientific">Staphylococcus aureus (strain MW2)</name>
    <dbReference type="NCBI Taxonomy" id="196620"/>
    <lineage>
        <taxon>Bacteria</taxon>
        <taxon>Bacillati</taxon>
        <taxon>Bacillota</taxon>
        <taxon>Bacilli</taxon>
        <taxon>Bacillales</taxon>
        <taxon>Staphylococcaceae</taxon>
        <taxon>Staphylococcus</taxon>
    </lineage>
</organism>
<evidence type="ECO:0000250" key="1"/>
<evidence type="ECO:0000255" key="2"/>
<evidence type="ECO:0000305" key="3"/>
<name>RBSU_STAAW</name>
<reference key="1">
    <citation type="journal article" date="2002" name="Lancet">
        <title>Genome and virulence determinants of high virulence community-acquired MRSA.</title>
        <authorList>
            <person name="Baba T."/>
            <person name="Takeuchi F."/>
            <person name="Kuroda M."/>
            <person name="Yuzawa H."/>
            <person name="Aoki K."/>
            <person name="Oguchi A."/>
            <person name="Nagai Y."/>
            <person name="Iwama N."/>
            <person name="Asano K."/>
            <person name="Naimi T."/>
            <person name="Kuroda H."/>
            <person name="Cui L."/>
            <person name="Yamamoto K."/>
            <person name="Hiramatsu K."/>
        </authorList>
    </citation>
    <scope>NUCLEOTIDE SEQUENCE [LARGE SCALE GENOMIC DNA]</scope>
    <source>
        <strain>MW2</strain>
    </source>
</reference>
<keyword id="KW-1003">Cell membrane</keyword>
<keyword id="KW-0472">Membrane</keyword>
<keyword id="KW-0762">Sugar transport</keyword>
<keyword id="KW-0812">Transmembrane</keyword>
<keyword id="KW-1133">Transmembrane helix</keyword>
<keyword id="KW-0813">Transport</keyword>
<accession>Q8NYG6</accession>
<dbReference type="EMBL" id="BA000033">
    <property type="protein sequence ID" value="BAB94111.1"/>
    <property type="molecule type" value="Genomic_DNA"/>
</dbReference>
<dbReference type="RefSeq" id="WP_000029204.1">
    <property type="nucleotide sequence ID" value="NC_003923.1"/>
</dbReference>
<dbReference type="KEGG" id="sam:MW0246"/>
<dbReference type="HOGENOM" id="CLU_076024_0_1_9"/>
<dbReference type="GO" id="GO:0005886">
    <property type="term" value="C:plasma membrane"/>
    <property type="evidence" value="ECO:0007669"/>
    <property type="project" value="UniProtKB-SubCell"/>
</dbReference>
<dbReference type="GO" id="GO:0015144">
    <property type="term" value="F:carbohydrate transmembrane transporter activity"/>
    <property type="evidence" value="ECO:0007669"/>
    <property type="project" value="InterPro"/>
</dbReference>
<dbReference type="CDD" id="cd23111">
    <property type="entry name" value="ribose_uptake_RbsU"/>
    <property type="match status" value="1"/>
</dbReference>
<dbReference type="InterPro" id="IPR010651">
    <property type="entry name" value="Sugar_transport"/>
</dbReference>
<dbReference type="NCBIfam" id="NF047342">
    <property type="entry name" value="symport_RbsU"/>
    <property type="match status" value="1"/>
</dbReference>
<dbReference type="PANTHER" id="PTHR16119">
    <property type="entry name" value="TRANSMEMBRANE PROTEIN 144"/>
    <property type="match status" value="1"/>
</dbReference>
<dbReference type="PANTHER" id="PTHR16119:SF17">
    <property type="entry name" value="TRANSMEMBRANE PROTEIN 144"/>
    <property type="match status" value="1"/>
</dbReference>
<dbReference type="Pfam" id="PF06800">
    <property type="entry name" value="Sugar_transport"/>
    <property type="match status" value="1"/>
</dbReference>
<dbReference type="SUPFAM" id="SSF103481">
    <property type="entry name" value="Multidrug resistance efflux transporter EmrE"/>
    <property type="match status" value="1"/>
</dbReference>
<gene>
    <name type="primary">rbsU</name>
    <name type="ordered locus">MW0246</name>
</gene>
<sequence>MSIVALLIGLGPLIGWGFFPTVASKFGGKPVHQIIGATVGTLIFAIILAVVTSSGFPTGTNLLFALLSGAGWGFGQIITFKAFELVGSSRAMPVTTAFQLLGASLWGVFALGNWPGIGHKIIGFTALVVILIGARMTVWSERKEASNAKNLRRAVVLLLIGEFGYWLYSAAPQATSIDGLTAFLPQAMGMVIVAVIYGFMNMKAENPFRNKITWLQIISGFFFAFGALTYLISAQPNMNGLATGFILSQTSVVLATLTGIYFLKQHKTSKEMVITIIGLVLILVAASVTVFIK</sequence>
<feature type="chain" id="PRO_0000213642" description="Putative ribose uptake protein RbsU">
    <location>
        <begin position="1"/>
        <end position="293"/>
    </location>
</feature>
<feature type="transmembrane region" description="Helical" evidence="2">
    <location>
        <begin position="2"/>
        <end position="24"/>
    </location>
</feature>
<feature type="transmembrane region" description="Helical" evidence="2">
    <location>
        <begin position="34"/>
        <end position="56"/>
    </location>
</feature>
<feature type="transmembrane region" description="Helical" evidence="2">
    <location>
        <begin position="63"/>
        <end position="80"/>
    </location>
</feature>
<feature type="transmembrane region" description="Helical" evidence="2">
    <location>
        <begin position="95"/>
        <end position="117"/>
    </location>
</feature>
<feature type="transmembrane region" description="Helical" evidence="2">
    <location>
        <begin position="122"/>
        <end position="139"/>
    </location>
</feature>
<feature type="transmembrane region" description="Helical" evidence="2">
    <location>
        <begin position="154"/>
        <end position="171"/>
    </location>
</feature>
<feature type="transmembrane region" description="Helical" evidence="2">
    <location>
        <begin position="180"/>
        <end position="202"/>
    </location>
</feature>
<feature type="transmembrane region" description="Helical" evidence="2">
    <location>
        <begin position="212"/>
        <end position="234"/>
    </location>
</feature>
<feature type="transmembrane region" description="Helical" evidence="2">
    <location>
        <begin position="241"/>
        <end position="263"/>
    </location>
</feature>
<feature type="transmembrane region" description="Helical" evidence="2">
    <location>
        <begin position="273"/>
        <end position="292"/>
    </location>
</feature>
<proteinExistence type="inferred from homology"/>
<comment type="function">
    <text evidence="1">Could be involved in the uptake of ribose.</text>
</comment>
<comment type="subcellular location">
    <subcellularLocation>
        <location evidence="3">Cell membrane</location>
        <topology evidence="3">Multi-pass membrane protein</topology>
    </subcellularLocation>
</comment>
<comment type="similarity">
    <text evidence="3">Belongs to the GRP transporter (TC 2.A.7.5) family.</text>
</comment>
<protein>
    <recommendedName>
        <fullName>Putative ribose uptake protein RbsU</fullName>
    </recommendedName>
</protein>